<comment type="similarity">
    <text evidence="1">Belongs to the universal ribosomal protein uS2 family.</text>
</comment>
<keyword id="KW-1185">Reference proteome</keyword>
<keyword id="KW-0687">Ribonucleoprotein</keyword>
<keyword id="KW-0689">Ribosomal protein</keyword>
<feature type="chain" id="PRO_1000204879" description="Small ribosomal subunit protein uS2">
    <location>
        <begin position="1"/>
        <end position="259"/>
    </location>
</feature>
<feature type="region of interest" description="Disordered" evidence="2">
    <location>
        <begin position="232"/>
        <end position="259"/>
    </location>
</feature>
<gene>
    <name evidence="1" type="primary">rpsB</name>
    <name type="ordered locus">Desal_1264</name>
</gene>
<proteinExistence type="inferred from homology"/>
<evidence type="ECO:0000255" key="1">
    <source>
        <dbReference type="HAMAP-Rule" id="MF_00291"/>
    </source>
</evidence>
<evidence type="ECO:0000256" key="2">
    <source>
        <dbReference type="SAM" id="MobiDB-lite"/>
    </source>
</evidence>
<evidence type="ECO:0000305" key="3"/>
<reference key="1">
    <citation type="submission" date="2009-06" db="EMBL/GenBank/DDBJ databases">
        <title>Complete sequence of Desulfovibrio salexigens DSM 2638.</title>
        <authorList>
            <consortium name="US DOE Joint Genome Institute"/>
            <person name="Lucas S."/>
            <person name="Copeland A."/>
            <person name="Lapidus A."/>
            <person name="Glavina del Rio T."/>
            <person name="Tice H."/>
            <person name="Bruce D."/>
            <person name="Goodwin L."/>
            <person name="Pitluck S."/>
            <person name="Munk A.C."/>
            <person name="Brettin T."/>
            <person name="Detter J.C."/>
            <person name="Han C."/>
            <person name="Tapia R."/>
            <person name="Larimer F."/>
            <person name="Land M."/>
            <person name="Hauser L."/>
            <person name="Kyrpides N."/>
            <person name="Anderson I."/>
            <person name="Wall J.D."/>
            <person name="Arkin A.P."/>
            <person name="Dehal P."/>
            <person name="Chivian D."/>
            <person name="Giles B."/>
            <person name="Hazen T.C."/>
        </authorList>
    </citation>
    <scope>NUCLEOTIDE SEQUENCE [LARGE SCALE GENOMIC DNA]</scope>
    <source>
        <strain>ATCC 14822 / DSM 2638 / NCIMB 8403 / VKM B-1763</strain>
    </source>
</reference>
<dbReference type="EMBL" id="CP001649">
    <property type="protein sequence ID" value="ACS79327.1"/>
    <property type="molecule type" value="Genomic_DNA"/>
</dbReference>
<dbReference type="RefSeq" id="WP_015851145.1">
    <property type="nucleotide sequence ID" value="NC_012881.1"/>
</dbReference>
<dbReference type="SMR" id="C6C1T1"/>
<dbReference type="STRING" id="526222.Desal_1264"/>
<dbReference type="KEGG" id="dsa:Desal_1264"/>
<dbReference type="eggNOG" id="COG0052">
    <property type="taxonomic scope" value="Bacteria"/>
</dbReference>
<dbReference type="HOGENOM" id="CLU_040318_1_2_7"/>
<dbReference type="OrthoDB" id="9808036at2"/>
<dbReference type="Proteomes" id="UP000002601">
    <property type="component" value="Chromosome"/>
</dbReference>
<dbReference type="GO" id="GO:0022627">
    <property type="term" value="C:cytosolic small ribosomal subunit"/>
    <property type="evidence" value="ECO:0007669"/>
    <property type="project" value="TreeGrafter"/>
</dbReference>
<dbReference type="GO" id="GO:0003735">
    <property type="term" value="F:structural constituent of ribosome"/>
    <property type="evidence" value="ECO:0007669"/>
    <property type="project" value="InterPro"/>
</dbReference>
<dbReference type="GO" id="GO:0006412">
    <property type="term" value="P:translation"/>
    <property type="evidence" value="ECO:0007669"/>
    <property type="project" value="UniProtKB-UniRule"/>
</dbReference>
<dbReference type="CDD" id="cd01425">
    <property type="entry name" value="RPS2"/>
    <property type="match status" value="1"/>
</dbReference>
<dbReference type="FunFam" id="1.10.287.610:FF:000001">
    <property type="entry name" value="30S ribosomal protein S2"/>
    <property type="match status" value="1"/>
</dbReference>
<dbReference type="Gene3D" id="3.40.50.10490">
    <property type="entry name" value="Glucose-6-phosphate isomerase like protein, domain 1"/>
    <property type="match status" value="1"/>
</dbReference>
<dbReference type="Gene3D" id="1.10.287.610">
    <property type="entry name" value="Helix hairpin bin"/>
    <property type="match status" value="1"/>
</dbReference>
<dbReference type="HAMAP" id="MF_00291_B">
    <property type="entry name" value="Ribosomal_uS2_B"/>
    <property type="match status" value="1"/>
</dbReference>
<dbReference type="InterPro" id="IPR001865">
    <property type="entry name" value="Ribosomal_uS2"/>
</dbReference>
<dbReference type="InterPro" id="IPR005706">
    <property type="entry name" value="Ribosomal_uS2_bac/mit/plastid"/>
</dbReference>
<dbReference type="InterPro" id="IPR018130">
    <property type="entry name" value="Ribosomal_uS2_CS"/>
</dbReference>
<dbReference type="InterPro" id="IPR023591">
    <property type="entry name" value="Ribosomal_uS2_flav_dom_sf"/>
</dbReference>
<dbReference type="NCBIfam" id="TIGR01011">
    <property type="entry name" value="rpsB_bact"/>
    <property type="match status" value="1"/>
</dbReference>
<dbReference type="PANTHER" id="PTHR12534">
    <property type="entry name" value="30S RIBOSOMAL PROTEIN S2 PROKARYOTIC AND ORGANELLAR"/>
    <property type="match status" value="1"/>
</dbReference>
<dbReference type="PANTHER" id="PTHR12534:SF0">
    <property type="entry name" value="SMALL RIBOSOMAL SUBUNIT PROTEIN US2M"/>
    <property type="match status" value="1"/>
</dbReference>
<dbReference type="Pfam" id="PF00318">
    <property type="entry name" value="Ribosomal_S2"/>
    <property type="match status" value="1"/>
</dbReference>
<dbReference type="PRINTS" id="PR00395">
    <property type="entry name" value="RIBOSOMALS2"/>
</dbReference>
<dbReference type="SUPFAM" id="SSF52313">
    <property type="entry name" value="Ribosomal protein S2"/>
    <property type="match status" value="1"/>
</dbReference>
<dbReference type="PROSITE" id="PS00962">
    <property type="entry name" value="RIBOSOMAL_S2_1"/>
    <property type="match status" value="1"/>
</dbReference>
<organism>
    <name type="scientific">Maridesulfovibrio salexigens (strain ATCC 14822 / DSM 2638 / NCIMB 8403 / VKM B-1763)</name>
    <name type="common">Desulfovibrio salexigens</name>
    <dbReference type="NCBI Taxonomy" id="526222"/>
    <lineage>
        <taxon>Bacteria</taxon>
        <taxon>Pseudomonadati</taxon>
        <taxon>Thermodesulfobacteriota</taxon>
        <taxon>Desulfovibrionia</taxon>
        <taxon>Desulfovibrionales</taxon>
        <taxon>Desulfovibrionaceae</taxon>
        <taxon>Maridesulfovibrio</taxon>
    </lineage>
</organism>
<name>RS2_MARSD</name>
<protein>
    <recommendedName>
        <fullName evidence="1">Small ribosomal subunit protein uS2</fullName>
    </recommendedName>
    <alternativeName>
        <fullName evidence="3">30S ribosomal protein S2</fullName>
    </alternativeName>
</protein>
<sequence length="259" mass="29011">MAYVTMKQMLETGVHFGHQTRRWNPKMRPYIFGARNGIHIMDLQQTVKLFRKAHDFIADNVAKGGKVLFIGTKRQAQEAIAAEASRAGMFHVTHRWMGGTLTNFQTIKKSIDRLKKLEEMFEDGSIKRFPKKEIVMMGREVKKLNLALGGIKDLNGAPAVAFVIDPKREQIAIQECRKLGIPVVAVVDSNCDPDMVDYIIPGNDDAIRAIKLFASHMADACLEGAARRKEDKAMEAEETKAAEKAVETEAKEETPQEAK</sequence>
<accession>C6C1T1</accession>